<proteinExistence type="inferred from homology"/>
<reference key="1">
    <citation type="submission" date="2007-07" db="EMBL/GenBank/DDBJ databases">
        <title>Complete sequence of chromosome of Shewanella baltica OS185.</title>
        <authorList>
            <consortium name="US DOE Joint Genome Institute"/>
            <person name="Copeland A."/>
            <person name="Lucas S."/>
            <person name="Lapidus A."/>
            <person name="Barry K."/>
            <person name="Glavina del Rio T."/>
            <person name="Dalin E."/>
            <person name="Tice H."/>
            <person name="Pitluck S."/>
            <person name="Sims D."/>
            <person name="Brettin T."/>
            <person name="Bruce D."/>
            <person name="Detter J.C."/>
            <person name="Han C."/>
            <person name="Schmutz J."/>
            <person name="Larimer F."/>
            <person name="Land M."/>
            <person name="Hauser L."/>
            <person name="Kyrpides N."/>
            <person name="Mikhailova N."/>
            <person name="Brettar I."/>
            <person name="Rodrigues J."/>
            <person name="Konstantinidis K."/>
            <person name="Tiedje J."/>
            <person name="Richardson P."/>
        </authorList>
    </citation>
    <scope>NUCLEOTIDE SEQUENCE [LARGE SCALE GENOMIC DNA]</scope>
    <source>
        <strain>OS185</strain>
    </source>
</reference>
<evidence type="ECO:0000255" key="1">
    <source>
        <dbReference type="HAMAP-Rule" id="MF_00518"/>
    </source>
</evidence>
<keyword id="KW-0963">Cytoplasm</keyword>
<keyword id="KW-0378">Hydrolase</keyword>
<keyword id="KW-0694">RNA-binding</keyword>
<keyword id="KW-0820">tRNA-binding</keyword>
<organism>
    <name type="scientific">Shewanella baltica (strain OS185)</name>
    <dbReference type="NCBI Taxonomy" id="402882"/>
    <lineage>
        <taxon>Bacteria</taxon>
        <taxon>Pseudomonadati</taxon>
        <taxon>Pseudomonadota</taxon>
        <taxon>Gammaproteobacteria</taxon>
        <taxon>Alteromonadales</taxon>
        <taxon>Shewanellaceae</taxon>
        <taxon>Shewanella</taxon>
    </lineage>
</organism>
<gene>
    <name evidence="1" type="primary">dtd</name>
    <name type="ordered locus">Shew185_0317</name>
</gene>
<sequence>MIALIQRVSRASVVVDNQTIGAIDKGLLVLLGVEQQDTREKMEKLATKVMSYRVFSDENGKMNLNLEQVGGSLLVVSQFTLAADTGRGLRPSFSGAGTPDQALALYEEFVAFCRAKGVTTETGQFGADMQVSLVNDGPVTFNLQV</sequence>
<protein>
    <recommendedName>
        <fullName evidence="1">D-aminoacyl-tRNA deacylase</fullName>
        <shortName evidence="1">DTD</shortName>
        <ecNumber evidence="1">3.1.1.96</ecNumber>
    </recommendedName>
    <alternativeName>
        <fullName evidence="1">Gly-tRNA(Ala) deacylase</fullName>
    </alternativeName>
</protein>
<dbReference type="EC" id="3.1.1.96" evidence="1"/>
<dbReference type="EMBL" id="CP000753">
    <property type="protein sequence ID" value="ABS06487.1"/>
    <property type="molecule type" value="Genomic_DNA"/>
</dbReference>
<dbReference type="RefSeq" id="WP_011982175.1">
    <property type="nucleotide sequence ID" value="NC_009665.1"/>
</dbReference>
<dbReference type="SMR" id="A6WI48"/>
<dbReference type="KEGG" id="sbm:Shew185_0317"/>
<dbReference type="HOGENOM" id="CLU_076901_1_0_6"/>
<dbReference type="GO" id="GO:0005737">
    <property type="term" value="C:cytoplasm"/>
    <property type="evidence" value="ECO:0007669"/>
    <property type="project" value="UniProtKB-SubCell"/>
</dbReference>
<dbReference type="GO" id="GO:0051500">
    <property type="term" value="F:D-tyrosyl-tRNA(Tyr) deacylase activity"/>
    <property type="evidence" value="ECO:0007669"/>
    <property type="project" value="TreeGrafter"/>
</dbReference>
<dbReference type="GO" id="GO:0106026">
    <property type="term" value="F:Gly-tRNA(Ala) deacylase activity"/>
    <property type="evidence" value="ECO:0007669"/>
    <property type="project" value="UniProtKB-UniRule"/>
</dbReference>
<dbReference type="GO" id="GO:0043908">
    <property type="term" value="F:Ser(Gly)-tRNA(Ala) hydrolase activity"/>
    <property type="evidence" value="ECO:0007669"/>
    <property type="project" value="UniProtKB-UniRule"/>
</dbReference>
<dbReference type="GO" id="GO:0000049">
    <property type="term" value="F:tRNA binding"/>
    <property type="evidence" value="ECO:0007669"/>
    <property type="project" value="UniProtKB-UniRule"/>
</dbReference>
<dbReference type="GO" id="GO:0019478">
    <property type="term" value="P:D-amino acid catabolic process"/>
    <property type="evidence" value="ECO:0007669"/>
    <property type="project" value="UniProtKB-UniRule"/>
</dbReference>
<dbReference type="CDD" id="cd00563">
    <property type="entry name" value="Dtyr_deacylase"/>
    <property type="match status" value="1"/>
</dbReference>
<dbReference type="FunFam" id="3.50.80.10:FF:000001">
    <property type="entry name" value="D-aminoacyl-tRNA deacylase"/>
    <property type="match status" value="1"/>
</dbReference>
<dbReference type="Gene3D" id="3.50.80.10">
    <property type="entry name" value="D-tyrosyl-tRNA(Tyr) deacylase"/>
    <property type="match status" value="1"/>
</dbReference>
<dbReference type="HAMAP" id="MF_00518">
    <property type="entry name" value="Deacylase_Dtd"/>
    <property type="match status" value="1"/>
</dbReference>
<dbReference type="InterPro" id="IPR003732">
    <property type="entry name" value="Daa-tRNA_deacyls_DTD"/>
</dbReference>
<dbReference type="InterPro" id="IPR023509">
    <property type="entry name" value="DTD-like_sf"/>
</dbReference>
<dbReference type="NCBIfam" id="TIGR00256">
    <property type="entry name" value="D-aminoacyl-tRNA deacylase"/>
    <property type="match status" value="1"/>
</dbReference>
<dbReference type="PANTHER" id="PTHR10472:SF5">
    <property type="entry name" value="D-AMINOACYL-TRNA DEACYLASE 1"/>
    <property type="match status" value="1"/>
</dbReference>
<dbReference type="PANTHER" id="PTHR10472">
    <property type="entry name" value="D-TYROSYL-TRNA TYR DEACYLASE"/>
    <property type="match status" value="1"/>
</dbReference>
<dbReference type="Pfam" id="PF02580">
    <property type="entry name" value="Tyr_Deacylase"/>
    <property type="match status" value="1"/>
</dbReference>
<dbReference type="SUPFAM" id="SSF69500">
    <property type="entry name" value="DTD-like"/>
    <property type="match status" value="1"/>
</dbReference>
<feature type="chain" id="PRO_1000050881" description="D-aminoacyl-tRNA deacylase">
    <location>
        <begin position="1"/>
        <end position="145"/>
    </location>
</feature>
<feature type="short sequence motif" description="Gly-cisPro motif, important for rejection of L-amino acids" evidence="1">
    <location>
        <begin position="137"/>
        <end position="138"/>
    </location>
</feature>
<comment type="function">
    <text evidence="1">An aminoacyl-tRNA editing enzyme that deacylates mischarged D-aminoacyl-tRNAs. Also deacylates mischarged glycyl-tRNA(Ala), protecting cells against glycine mischarging by AlaRS. Acts via tRNA-based rather than protein-based catalysis; rejects L-amino acids rather than detecting D-amino acids in the active site. By recycling D-aminoacyl-tRNA to D-amino acids and free tRNA molecules, this enzyme counteracts the toxicity associated with the formation of D-aminoacyl-tRNA entities in vivo and helps enforce protein L-homochirality.</text>
</comment>
<comment type="catalytic activity">
    <reaction evidence="1">
        <text>glycyl-tRNA(Ala) + H2O = tRNA(Ala) + glycine + H(+)</text>
        <dbReference type="Rhea" id="RHEA:53744"/>
        <dbReference type="Rhea" id="RHEA-COMP:9657"/>
        <dbReference type="Rhea" id="RHEA-COMP:13640"/>
        <dbReference type="ChEBI" id="CHEBI:15377"/>
        <dbReference type="ChEBI" id="CHEBI:15378"/>
        <dbReference type="ChEBI" id="CHEBI:57305"/>
        <dbReference type="ChEBI" id="CHEBI:78442"/>
        <dbReference type="ChEBI" id="CHEBI:78522"/>
        <dbReference type="EC" id="3.1.1.96"/>
    </reaction>
</comment>
<comment type="catalytic activity">
    <reaction evidence="1">
        <text>a D-aminoacyl-tRNA + H2O = a tRNA + a D-alpha-amino acid + H(+)</text>
        <dbReference type="Rhea" id="RHEA:13953"/>
        <dbReference type="Rhea" id="RHEA-COMP:10123"/>
        <dbReference type="Rhea" id="RHEA-COMP:10124"/>
        <dbReference type="ChEBI" id="CHEBI:15377"/>
        <dbReference type="ChEBI" id="CHEBI:15378"/>
        <dbReference type="ChEBI" id="CHEBI:59871"/>
        <dbReference type="ChEBI" id="CHEBI:78442"/>
        <dbReference type="ChEBI" id="CHEBI:79333"/>
        <dbReference type="EC" id="3.1.1.96"/>
    </reaction>
</comment>
<comment type="subunit">
    <text evidence="1">Homodimer.</text>
</comment>
<comment type="subcellular location">
    <subcellularLocation>
        <location evidence="1">Cytoplasm</location>
    </subcellularLocation>
</comment>
<comment type="domain">
    <text evidence="1">A Gly-cisPro motif from one monomer fits into the active site of the other monomer to allow specific chiral rejection of L-amino acids.</text>
</comment>
<comment type="similarity">
    <text evidence="1">Belongs to the DTD family.</text>
</comment>
<accession>A6WI48</accession>
<name>DTD_SHEB8</name>